<feature type="chain" id="PRO_0000341933" description="2-succinyl-6-hydroxy-2,4-cyclohexadiene-1-carboxylate synthase">
    <location>
        <begin position="1"/>
        <end position="272"/>
    </location>
</feature>
<evidence type="ECO:0000255" key="1">
    <source>
        <dbReference type="HAMAP-Rule" id="MF_01660"/>
    </source>
</evidence>
<gene>
    <name evidence="1" type="primary">menH</name>
    <name type="ordered locus">YPN_2121</name>
    <name type="ORF">YP516_2364</name>
</gene>
<keyword id="KW-0456">Lyase</keyword>
<keyword id="KW-0474">Menaquinone biosynthesis</keyword>
<comment type="function">
    <text evidence="1">Catalyzes a proton abstraction reaction that results in 2,5-elimination of pyruvate from 2-succinyl-5-enolpyruvyl-6-hydroxy-3-cyclohexene-1-carboxylate (SEPHCHC) and the formation of 2-succinyl-6-hydroxy-2,4-cyclohexadiene-1-carboxylate (SHCHC).</text>
</comment>
<comment type="catalytic activity">
    <reaction evidence="1">
        <text>5-enolpyruvoyl-6-hydroxy-2-succinyl-cyclohex-3-ene-1-carboxylate = (1R,6R)-6-hydroxy-2-succinyl-cyclohexa-2,4-diene-1-carboxylate + pyruvate</text>
        <dbReference type="Rhea" id="RHEA:25597"/>
        <dbReference type="ChEBI" id="CHEBI:15361"/>
        <dbReference type="ChEBI" id="CHEBI:58689"/>
        <dbReference type="ChEBI" id="CHEBI:58818"/>
        <dbReference type="EC" id="4.2.99.20"/>
    </reaction>
</comment>
<comment type="pathway">
    <text evidence="1">Quinol/quinone metabolism; 1,4-dihydroxy-2-naphthoate biosynthesis; 1,4-dihydroxy-2-naphthoate from chorismate: step 3/7.</text>
</comment>
<comment type="pathway">
    <text evidence="1">Quinol/quinone metabolism; menaquinone biosynthesis.</text>
</comment>
<comment type="subunit">
    <text evidence="1">Monomer.</text>
</comment>
<comment type="similarity">
    <text evidence="1">Belongs to the AB hydrolase superfamily. MenH family.</text>
</comment>
<accession>Q1CHT0</accession>
<accession>C4GV39</accession>
<reference key="1">
    <citation type="journal article" date="2006" name="J. Bacteriol.">
        <title>Complete genome sequence of Yersinia pestis strains Antiqua and Nepal516: evidence of gene reduction in an emerging pathogen.</title>
        <authorList>
            <person name="Chain P.S.G."/>
            <person name="Hu P."/>
            <person name="Malfatti S.A."/>
            <person name="Radnedge L."/>
            <person name="Larimer F."/>
            <person name="Vergez L.M."/>
            <person name="Worsham P."/>
            <person name="Chu M.C."/>
            <person name="Andersen G.L."/>
        </authorList>
    </citation>
    <scope>NUCLEOTIDE SEQUENCE [LARGE SCALE GENOMIC DNA]</scope>
    <source>
        <strain>Nepal516</strain>
    </source>
</reference>
<reference key="2">
    <citation type="submission" date="2009-04" db="EMBL/GenBank/DDBJ databases">
        <title>Yersinia pestis Nepal516A whole genome shotgun sequencing project.</title>
        <authorList>
            <person name="Plunkett G. III"/>
            <person name="Anderson B.D."/>
            <person name="Baumler D.J."/>
            <person name="Burland V."/>
            <person name="Cabot E.L."/>
            <person name="Glasner J.D."/>
            <person name="Mau B."/>
            <person name="Neeno-Eckwall E."/>
            <person name="Perna N.T."/>
            <person name="Munk A.C."/>
            <person name="Tapia R."/>
            <person name="Green L.D."/>
            <person name="Rogers Y.C."/>
            <person name="Detter J.C."/>
            <person name="Bruce D.C."/>
            <person name="Brettin T.S."/>
        </authorList>
    </citation>
    <scope>NUCLEOTIDE SEQUENCE [LARGE SCALE GENOMIC DNA]</scope>
    <source>
        <strain>Nepal516</strain>
    </source>
</reference>
<dbReference type="EC" id="4.2.99.20" evidence="1"/>
<dbReference type="EMBL" id="CP000305">
    <property type="protein sequence ID" value="ABG18450.1"/>
    <property type="molecule type" value="Genomic_DNA"/>
</dbReference>
<dbReference type="EMBL" id="ACNQ01000013">
    <property type="protein sequence ID" value="EEO76167.1"/>
    <property type="molecule type" value="Genomic_DNA"/>
</dbReference>
<dbReference type="RefSeq" id="WP_002228508.1">
    <property type="nucleotide sequence ID" value="NZ_ACNQ01000013.1"/>
</dbReference>
<dbReference type="SMR" id="Q1CHT0"/>
<dbReference type="ESTHER" id="yerpe-YPO2526">
    <property type="family name" value="MenH_SHCHC"/>
</dbReference>
<dbReference type="KEGG" id="ypn:YPN_2121"/>
<dbReference type="HOGENOM" id="CLU_020336_38_2_6"/>
<dbReference type="UniPathway" id="UPA00079"/>
<dbReference type="UniPathway" id="UPA01057">
    <property type="reaction ID" value="UER00900"/>
</dbReference>
<dbReference type="Proteomes" id="UP000008936">
    <property type="component" value="Chromosome"/>
</dbReference>
<dbReference type="GO" id="GO:0070205">
    <property type="term" value="F:2-succinyl-6-hydroxy-2,4-cyclohexadiene-1-carboxylate synthase activity"/>
    <property type="evidence" value="ECO:0007669"/>
    <property type="project" value="UniProtKB-UniRule"/>
</dbReference>
<dbReference type="GO" id="GO:0009234">
    <property type="term" value="P:menaquinone biosynthetic process"/>
    <property type="evidence" value="ECO:0007669"/>
    <property type="project" value="UniProtKB-UniRule"/>
</dbReference>
<dbReference type="Gene3D" id="3.40.50.1820">
    <property type="entry name" value="alpha/beta hydrolase"/>
    <property type="match status" value="1"/>
</dbReference>
<dbReference type="HAMAP" id="MF_01660">
    <property type="entry name" value="MenH"/>
    <property type="match status" value="1"/>
</dbReference>
<dbReference type="InterPro" id="IPR000073">
    <property type="entry name" value="AB_hydrolase_1"/>
</dbReference>
<dbReference type="InterPro" id="IPR029058">
    <property type="entry name" value="AB_hydrolase_fold"/>
</dbReference>
<dbReference type="InterPro" id="IPR022485">
    <property type="entry name" value="SHCHC_synthase_MenH"/>
</dbReference>
<dbReference type="NCBIfam" id="TIGR03695">
    <property type="entry name" value="menH_SHCHC"/>
    <property type="match status" value="1"/>
</dbReference>
<dbReference type="NCBIfam" id="NF008340">
    <property type="entry name" value="PRK11126.1"/>
    <property type="match status" value="1"/>
</dbReference>
<dbReference type="PANTHER" id="PTHR42916">
    <property type="entry name" value="2-SUCCINYL-5-ENOLPYRUVYL-6-HYDROXY-3-CYCLOHEXENE-1-CARBOXYLATE SYNTHASE"/>
    <property type="match status" value="1"/>
</dbReference>
<dbReference type="PANTHER" id="PTHR42916:SF1">
    <property type="entry name" value="PROTEIN PHYLLO, CHLOROPLASTIC"/>
    <property type="match status" value="1"/>
</dbReference>
<dbReference type="Pfam" id="PF12697">
    <property type="entry name" value="Abhydrolase_6"/>
    <property type="match status" value="1"/>
</dbReference>
<dbReference type="SUPFAM" id="SSF53474">
    <property type="entry name" value="alpha/beta-Hydrolases"/>
    <property type="match status" value="1"/>
</dbReference>
<organism>
    <name type="scientific">Yersinia pestis bv. Antiqua (strain Nepal516)</name>
    <dbReference type="NCBI Taxonomy" id="377628"/>
    <lineage>
        <taxon>Bacteria</taxon>
        <taxon>Pseudomonadati</taxon>
        <taxon>Pseudomonadota</taxon>
        <taxon>Gammaproteobacteria</taxon>
        <taxon>Enterobacterales</taxon>
        <taxon>Yersiniaceae</taxon>
        <taxon>Yersinia</taxon>
    </lineage>
</organism>
<name>MENH_YERPN</name>
<protein>
    <recommendedName>
        <fullName evidence="1">2-succinyl-6-hydroxy-2,4-cyclohexadiene-1-carboxylate synthase</fullName>
        <shortName evidence="1">SHCHC synthase</shortName>
        <ecNumber evidence="1">4.2.99.20</ecNumber>
    </recommendedName>
</protein>
<proteinExistence type="inferred from homology"/>
<sequence length="272" mass="30298">MTTLACRKLAPHPESPRHQHAGPWLVWLHGLLGSGQDWLPVAQLCGDYPSLLIDLPGHGQSVSLSADGFADISRQLSQTLQANGIREYWLAGYSLGGRIAIYHACYGRHHGLQGLLVEGGNLGLENAELRQARLQQDRQWAQRFRQEPLPQVLDDWYQQAVFADLDPQQREQLVLLRADNHGLAVAEMLEATSLGHQPWLLPALQRLNVPYTYLCGDRDHKFLQLAQQYRLPLHTLARAGHNAHRANPGAFAAQVLAFLSQSSCLPPSSLSR</sequence>